<name>RL19_SINMW</name>
<organism>
    <name type="scientific">Sinorhizobium medicae (strain WSM419)</name>
    <name type="common">Ensifer medicae</name>
    <dbReference type="NCBI Taxonomy" id="366394"/>
    <lineage>
        <taxon>Bacteria</taxon>
        <taxon>Pseudomonadati</taxon>
        <taxon>Pseudomonadota</taxon>
        <taxon>Alphaproteobacteria</taxon>
        <taxon>Hyphomicrobiales</taxon>
        <taxon>Rhizobiaceae</taxon>
        <taxon>Sinorhizobium/Ensifer group</taxon>
        <taxon>Sinorhizobium</taxon>
    </lineage>
</organism>
<reference key="1">
    <citation type="submission" date="2007-06" db="EMBL/GenBank/DDBJ databases">
        <title>Complete sequence of Sinorhizobium medicae WSM419 chromosome.</title>
        <authorList>
            <consortium name="US DOE Joint Genome Institute"/>
            <person name="Copeland A."/>
            <person name="Lucas S."/>
            <person name="Lapidus A."/>
            <person name="Barry K."/>
            <person name="Glavina del Rio T."/>
            <person name="Dalin E."/>
            <person name="Tice H."/>
            <person name="Pitluck S."/>
            <person name="Chain P."/>
            <person name="Malfatti S."/>
            <person name="Shin M."/>
            <person name="Vergez L."/>
            <person name="Schmutz J."/>
            <person name="Larimer F."/>
            <person name="Land M."/>
            <person name="Hauser L."/>
            <person name="Kyrpides N."/>
            <person name="Mikhailova N."/>
            <person name="Reeve W.G."/>
            <person name="Richardson P."/>
        </authorList>
    </citation>
    <scope>NUCLEOTIDE SEQUENCE [LARGE SCALE GENOMIC DNA]</scope>
    <source>
        <strain>WSM419</strain>
    </source>
</reference>
<comment type="function">
    <text evidence="1">This protein is located at the 30S-50S ribosomal subunit interface and may play a role in the structure and function of the aminoacyl-tRNA binding site.</text>
</comment>
<comment type="similarity">
    <text evidence="1">Belongs to the bacterial ribosomal protein bL19 family.</text>
</comment>
<accession>A6UE47</accession>
<gene>
    <name evidence="1" type="primary">rplS</name>
    <name type="ordered locus">Smed_3101</name>
</gene>
<sequence length="177" mass="19244">MNIIQQLEAEQAAKIAAKRTLPEFSPGDTVRVNVRVVEGTRTRVQAYEGVCIARSGGGINESFTVRKISYGEGVERVFPVYSPLVESVDVVRRGKVRRAKLYYLRDRRGKSARIVENTGTRARKLNDAERQAISEEKARIEAEKVAAAQALAAEKAAAEAAEAKAAEEAKAAEAAAE</sequence>
<proteinExistence type="inferred from homology"/>
<protein>
    <recommendedName>
        <fullName evidence="1">Large ribosomal subunit protein bL19</fullName>
    </recommendedName>
    <alternativeName>
        <fullName evidence="2">50S ribosomal protein L19</fullName>
    </alternativeName>
</protein>
<dbReference type="EMBL" id="CP000738">
    <property type="protein sequence ID" value="ABR61927.1"/>
    <property type="molecule type" value="Genomic_DNA"/>
</dbReference>
<dbReference type="RefSeq" id="WP_012067308.1">
    <property type="nucleotide sequence ID" value="NC_009636.1"/>
</dbReference>
<dbReference type="RefSeq" id="YP_001328762.1">
    <property type="nucleotide sequence ID" value="NC_009636.1"/>
</dbReference>
<dbReference type="SMR" id="A6UE47"/>
<dbReference type="STRING" id="366394.Smed_3101"/>
<dbReference type="GeneID" id="61610686"/>
<dbReference type="KEGG" id="smd:Smed_3101"/>
<dbReference type="PATRIC" id="fig|366394.8.peg.6332"/>
<dbReference type="eggNOG" id="COG0335">
    <property type="taxonomic scope" value="Bacteria"/>
</dbReference>
<dbReference type="HOGENOM" id="CLU_103507_0_2_5"/>
<dbReference type="OrthoDB" id="9803541at2"/>
<dbReference type="Proteomes" id="UP000001108">
    <property type="component" value="Chromosome"/>
</dbReference>
<dbReference type="GO" id="GO:0022625">
    <property type="term" value="C:cytosolic large ribosomal subunit"/>
    <property type="evidence" value="ECO:0007669"/>
    <property type="project" value="TreeGrafter"/>
</dbReference>
<dbReference type="GO" id="GO:0003735">
    <property type="term" value="F:structural constituent of ribosome"/>
    <property type="evidence" value="ECO:0007669"/>
    <property type="project" value="InterPro"/>
</dbReference>
<dbReference type="GO" id="GO:0006412">
    <property type="term" value="P:translation"/>
    <property type="evidence" value="ECO:0007669"/>
    <property type="project" value="UniProtKB-UniRule"/>
</dbReference>
<dbReference type="FunFam" id="2.30.30.790:FF:000001">
    <property type="entry name" value="50S ribosomal protein L19"/>
    <property type="match status" value="1"/>
</dbReference>
<dbReference type="Gene3D" id="2.30.30.790">
    <property type="match status" value="1"/>
</dbReference>
<dbReference type="HAMAP" id="MF_00402">
    <property type="entry name" value="Ribosomal_bL19"/>
    <property type="match status" value="1"/>
</dbReference>
<dbReference type="InterPro" id="IPR001857">
    <property type="entry name" value="Ribosomal_bL19"/>
</dbReference>
<dbReference type="InterPro" id="IPR018257">
    <property type="entry name" value="Ribosomal_bL19_CS"/>
</dbReference>
<dbReference type="InterPro" id="IPR038657">
    <property type="entry name" value="Ribosomal_bL19_sf"/>
</dbReference>
<dbReference type="InterPro" id="IPR008991">
    <property type="entry name" value="Translation_prot_SH3-like_sf"/>
</dbReference>
<dbReference type="NCBIfam" id="TIGR01024">
    <property type="entry name" value="rplS_bact"/>
    <property type="match status" value="1"/>
</dbReference>
<dbReference type="PANTHER" id="PTHR15680:SF9">
    <property type="entry name" value="LARGE RIBOSOMAL SUBUNIT PROTEIN BL19M"/>
    <property type="match status" value="1"/>
</dbReference>
<dbReference type="PANTHER" id="PTHR15680">
    <property type="entry name" value="RIBOSOMAL PROTEIN L19"/>
    <property type="match status" value="1"/>
</dbReference>
<dbReference type="Pfam" id="PF01245">
    <property type="entry name" value="Ribosomal_L19"/>
    <property type="match status" value="1"/>
</dbReference>
<dbReference type="PRINTS" id="PR00061">
    <property type="entry name" value="RIBOSOMALL19"/>
</dbReference>
<dbReference type="SUPFAM" id="SSF50104">
    <property type="entry name" value="Translation proteins SH3-like domain"/>
    <property type="match status" value="1"/>
</dbReference>
<dbReference type="PROSITE" id="PS01015">
    <property type="entry name" value="RIBOSOMAL_L19"/>
    <property type="match status" value="1"/>
</dbReference>
<evidence type="ECO:0000255" key="1">
    <source>
        <dbReference type="HAMAP-Rule" id="MF_00402"/>
    </source>
</evidence>
<evidence type="ECO:0000305" key="2"/>
<feature type="chain" id="PRO_1000049749" description="Large ribosomal subunit protein bL19">
    <location>
        <begin position="1"/>
        <end position="177"/>
    </location>
</feature>
<keyword id="KW-0687">Ribonucleoprotein</keyword>
<keyword id="KW-0689">Ribosomal protein</keyword>